<dbReference type="EC" id="5.4.2.11" evidence="1"/>
<dbReference type="EMBL" id="CP000050">
    <property type="protein sequence ID" value="AAY48472.1"/>
    <property type="molecule type" value="Genomic_DNA"/>
</dbReference>
<dbReference type="RefSeq" id="WP_011037842.1">
    <property type="nucleotide sequence ID" value="NZ_CP155948.1"/>
</dbReference>
<dbReference type="SMR" id="Q4UWV1"/>
<dbReference type="KEGG" id="xcb:XC_1404"/>
<dbReference type="HOGENOM" id="CLU_033323_1_1_6"/>
<dbReference type="UniPathway" id="UPA00109">
    <property type="reaction ID" value="UER00186"/>
</dbReference>
<dbReference type="Proteomes" id="UP000000420">
    <property type="component" value="Chromosome"/>
</dbReference>
<dbReference type="GO" id="GO:0004619">
    <property type="term" value="F:phosphoglycerate mutase activity"/>
    <property type="evidence" value="ECO:0007669"/>
    <property type="project" value="UniProtKB-EC"/>
</dbReference>
<dbReference type="GO" id="GO:0006094">
    <property type="term" value="P:gluconeogenesis"/>
    <property type="evidence" value="ECO:0007669"/>
    <property type="project" value="UniProtKB-UniRule"/>
</dbReference>
<dbReference type="GO" id="GO:0006096">
    <property type="term" value="P:glycolytic process"/>
    <property type="evidence" value="ECO:0007669"/>
    <property type="project" value="UniProtKB-UniRule"/>
</dbReference>
<dbReference type="CDD" id="cd07067">
    <property type="entry name" value="HP_PGM_like"/>
    <property type="match status" value="1"/>
</dbReference>
<dbReference type="FunFam" id="3.40.50.1240:FF:000003">
    <property type="entry name" value="2,3-bisphosphoglycerate-dependent phosphoglycerate mutase"/>
    <property type="match status" value="1"/>
</dbReference>
<dbReference type="Gene3D" id="3.40.50.1240">
    <property type="entry name" value="Phosphoglycerate mutase-like"/>
    <property type="match status" value="1"/>
</dbReference>
<dbReference type="HAMAP" id="MF_01039">
    <property type="entry name" value="PGAM_GpmA"/>
    <property type="match status" value="1"/>
</dbReference>
<dbReference type="InterPro" id="IPR013078">
    <property type="entry name" value="His_Pase_superF_clade-1"/>
</dbReference>
<dbReference type="InterPro" id="IPR029033">
    <property type="entry name" value="His_PPase_superfam"/>
</dbReference>
<dbReference type="InterPro" id="IPR001345">
    <property type="entry name" value="PG/BPGM_mutase_AS"/>
</dbReference>
<dbReference type="InterPro" id="IPR005952">
    <property type="entry name" value="Phosphogly_mut1"/>
</dbReference>
<dbReference type="NCBIfam" id="TIGR01258">
    <property type="entry name" value="pgm_1"/>
    <property type="match status" value="1"/>
</dbReference>
<dbReference type="NCBIfam" id="NF010713">
    <property type="entry name" value="PRK14115.1"/>
    <property type="match status" value="1"/>
</dbReference>
<dbReference type="PANTHER" id="PTHR11931">
    <property type="entry name" value="PHOSPHOGLYCERATE MUTASE"/>
    <property type="match status" value="1"/>
</dbReference>
<dbReference type="Pfam" id="PF00300">
    <property type="entry name" value="His_Phos_1"/>
    <property type="match status" value="2"/>
</dbReference>
<dbReference type="PIRSF" id="PIRSF000709">
    <property type="entry name" value="6PFK_2-Ptase"/>
    <property type="match status" value="1"/>
</dbReference>
<dbReference type="SMART" id="SM00855">
    <property type="entry name" value="PGAM"/>
    <property type="match status" value="1"/>
</dbReference>
<dbReference type="SUPFAM" id="SSF53254">
    <property type="entry name" value="Phosphoglycerate mutase-like"/>
    <property type="match status" value="1"/>
</dbReference>
<dbReference type="PROSITE" id="PS00175">
    <property type="entry name" value="PG_MUTASE"/>
    <property type="match status" value="1"/>
</dbReference>
<reference key="1">
    <citation type="journal article" date="2005" name="Genome Res.">
        <title>Comparative and functional genomic analyses of the pathogenicity of phytopathogen Xanthomonas campestris pv. campestris.</title>
        <authorList>
            <person name="Qian W."/>
            <person name="Jia Y."/>
            <person name="Ren S.-X."/>
            <person name="He Y.-Q."/>
            <person name="Feng J.-X."/>
            <person name="Lu L.-F."/>
            <person name="Sun Q."/>
            <person name="Ying G."/>
            <person name="Tang D.-J."/>
            <person name="Tang H."/>
            <person name="Wu W."/>
            <person name="Hao P."/>
            <person name="Wang L."/>
            <person name="Jiang B.-L."/>
            <person name="Zeng S."/>
            <person name="Gu W.-Y."/>
            <person name="Lu G."/>
            <person name="Rong L."/>
            <person name="Tian Y."/>
            <person name="Yao Z."/>
            <person name="Fu G."/>
            <person name="Chen B."/>
            <person name="Fang R."/>
            <person name="Qiang B."/>
            <person name="Chen Z."/>
            <person name="Zhao G.-P."/>
            <person name="Tang J.-L."/>
            <person name="He C."/>
        </authorList>
    </citation>
    <scope>NUCLEOTIDE SEQUENCE [LARGE SCALE GENOMIC DNA]</scope>
    <source>
        <strain>8004</strain>
    </source>
</reference>
<comment type="function">
    <text evidence="1">Catalyzes the interconversion of 2-phosphoglycerate and 3-phosphoglycerate.</text>
</comment>
<comment type="catalytic activity">
    <reaction evidence="1">
        <text>(2R)-2-phosphoglycerate = (2R)-3-phosphoglycerate</text>
        <dbReference type="Rhea" id="RHEA:15901"/>
        <dbReference type="ChEBI" id="CHEBI:58272"/>
        <dbReference type="ChEBI" id="CHEBI:58289"/>
        <dbReference type="EC" id="5.4.2.11"/>
    </reaction>
</comment>
<comment type="pathway">
    <text evidence="1">Carbohydrate degradation; glycolysis; pyruvate from D-glyceraldehyde 3-phosphate: step 3/5.</text>
</comment>
<comment type="subunit">
    <text evidence="1">Homodimer.</text>
</comment>
<comment type="similarity">
    <text evidence="1">Belongs to the phosphoglycerate mutase family. BPG-dependent PGAM subfamily.</text>
</comment>
<proteinExistence type="inferred from homology"/>
<feature type="chain" id="PRO_0000229148" description="2,3-bisphosphoglycerate-dependent phosphoglycerate mutase">
    <location>
        <begin position="1"/>
        <end position="249"/>
    </location>
</feature>
<feature type="active site" description="Tele-phosphohistidine intermediate" evidence="1">
    <location>
        <position position="10"/>
    </location>
</feature>
<feature type="active site" description="Proton donor/acceptor" evidence="1">
    <location>
        <position position="88"/>
    </location>
</feature>
<feature type="binding site" evidence="1">
    <location>
        <begin position="9"/>
        <end position="16"/>
    </location>
    <ligand>
        <name>substrate</name>
    </ligand>
</feature>
<feature type="binding site" evidence="1">
    <location>
        <begin position="22"/>
        <end position="23"/>
    </location>
    <ligand>
        <name>substrate</name>
    </ligand>
</feature>
<feature type="binding site" evidence="1">
    <location>
        <position position="61"/>
    </location>
    <ligand>
        <name>substrate</name>
    </ligand>
</feature>
<feature type="binding site" evidence="1">
    <location>
        <begin position="88"/>
        <end position="91"/>
    </location>
    <ligand>
        <name>substrate</name>
    </ligand>
</feature>
<feature type="binding site" evidence="1">
    <location>
        <position position="99"/>
    </location>
    <ligand>
        <name>substrate</name>
    </ligand>
</feature>
<feature type="binding site" evidence="1">
    <location>
        <begin position="115"/>
        <end position="116"/>
    </location>
    <ligand>
        <name>substrate</name>
    </ligand>
</feature>
<feature type="binding site" evidence="1">
    <location>
        <begin position="184"/>
        <end position="185"/>
    </location>
    <ligand>
        <name>substrate</name>
    </ligand>
</feature>
<feature type="site" description="Transition state stabilizer" evidence="1">
    <location>
        <position position="183"/>
    </location>
</feature>
<evidence type="ECO:0000255" key="1">
    <source>
        <dbReference type="HAMAP-Rule" id="MF_01039"/>
    </source>
</evidence>
<sequence length="249" mass="27918">MTRKLVLLRHGQSQWNLDNRFTGWVDVDLTEQGRQEAAAAGKLMKDEGLQFDVAYTSVLKRAIHTLQGALKELDQDWLPVHKSWRLNERHYGGLQGLDKAETAAKHGEEQVKIWRRSYDIPPPAMDVTDPGHPGHDRRYATLDRNALPGTESLATTLVRVLPYWHDAIAPQLKAGQTVLVTAHGNSLRALYKYLNDISNAQILELNIPTGIPLLFELDDNLQVQSYRYLGDPEAAKRAAEAVANQGKAK</sequence>
<keyword id="KW-0312">Gluconeogenesis</keyword>
<keyword id="KW-0324">Glycolysis</keyword>
<keyword id="KW-0413">Isomerase</keyword>
<gene>
    <name evidence="1" type="primary">gpmA</name>
    <name type="ordered locus">XC_1404</name>
</gene>
<accession>Q4UWV1</accession>
<protein>
    <recommendedName>
        <fullName evidence="1">2,3-bisphosphoglycerate-dependent phosphoglycerate mutase</fullName>
        <shortName evidence="1">BPG-dependent PGAM</shortName>
        <shortName evidence="1">PGAM</shortName>
        <shortName evidence="1">Phosphoglyceromutase</shortName>
        <shortName evidence="1">dPGM</shortName>
        <ecNumber evidence="1">5.4.2.11</ecNumber>
    </recommendedName>
</protein>
<name>GPMA_XANC8</name>
<organism>
    <name type="scientific">Xanthomonas campestris pv. campestris (strain 8004)</name>
    <dbReference type="NCBI Taxonomy" id="314565"/>
    <lineage>
        <taxon>Bacteria</taxon>
        <taxon>Pseudomonadati</taxon>
        <taxon>Pseudomonadota</taxon>
        <taxon>Gammaproteobacteria</taxon>
        <taxon>Lysobacterales</taxon>
        <taxon>Lysobacteraceae</taxon>
        <taxon>Xanthomonas</taxon>
    </lineage>
</organism>